<organism>
    <name type="scientific">Gloeobacter violaceus (strain ATCC 29082 / PCC 7421)</name>
    <dbReference type="NCBI Taxonomy" id="251221"/>
    <lineage>
        <taxon>Bacteria</taxon>
        <taxon>Bacillati</taxon>
        <taxon>Cyanobacteriota</taxon>
        <taxon>Cyanophyceae</taxon>
        <taxon>Gloeobacterales</taxon>
        <taxon>Gloeobacteraceae</taxon>
        <taxon>Gloeobacter</taxon>
    </lineage>
</organism>
<protein>
    <recommendedName>
        <fullName evidence="1">GTPase Der</fullName>
    </recommendedName>
    <alternativeName>
        <fullName evidence="1">GTP-binding protein EngA</fullName>
    </alternativeName>
</protein>
<reference key="1">
    <citation type="journal article" date="2003" name="DNA Res.">
        <title>Complete genome structure of Gloeobacter violaceus PCC 7421, a cyanobacterium that lacks thylakoids.</title>
        <authorList>
            <person name="Nakamura Y."/>
            <person name="Kaneko T."/>
            <person name="Sato S."/>
            <person name="Mimuro M."/>
            <person name="Miyashita H."/>
            <person name="Tsuchiya T."/>
            <person name="Sasamoto S."/>
            <person name="Watanabe A."/>
            <person name="Kawashima K."/>
            <person name="Kishida Y."/>
            <person name="Kiyokawa C."/>
            <person name="Kohara M."/>
            <person name="Matsumoto M."/>
            <person name="Matsuno A."/>
            <person name="Nakazaki N."/>
            <person name="Shimpo S."/>
            <person name="Takeuchi C."/>
            <person name="Yamada M."/>
            <person name="Tabata S."/>
        </authorList>
    </citation>
    <scope>NUCLEOTIDE SEQUENCE [LARGE SCALE GENOMIC DNA]</scope>
    <source>
        <strain>ATCC 29082 / PCC 7421</strain>
    </source>
</reference>
<accession>Q7NGF9</accession>
<proteinExistence type="inferred from homology"/>
<name>DER_GLOVI</name>
<feature type="chain" id="PRO_0000178996" description="GTPase Der">
    <location>
        <begin position="1"/>
        <end position="455"/>
    </location>
</feature>
<feature type="domain" description="EngA-type G 1">
    <location>
        <begin position="4"/>
        <end position="169"/>
    </location>
</feature>
<feature type="domain" description="EngA-type G 2">
    <location>
        <begin position="178"/>
        <end position="355"/>
    </location>
</feature>
<feature type="domain" description="KH-like" evidence="1">
    <location>
        <begin position="356"/>
        <end position="441"/>
    </location>
</feature>
<feature type="binding site" evidence="1">
    <location>
        <begin position="10"/>
        <end position="17"/>
    </location>
    <ligand>
        <name>GTP</name>
        <dbReference type="ChEBI" id="CHEBI:37565"/>
        <label>1</label>
    </ligand>
</feature>
<feature type="binding site" evidence="1">
    <location>
        <begin position="57"/>
        <end position="61"/>
    </location>
    <ligand>
        <name>GTP</name>
        <dbReference type="ChEBI" id="CHEBI:37565"/>
        <label>1</label>
    </ligand>
</feature>
<feature type="binding site" evidence="1">
    <location>
        <begin position="120"/>
        <end position="123"/>
    </location>
    <ligand>
        <name>GTP</name>
        <dbReference type="ChEBI" id="CHEBI:37565"/>
        <label>1</label>
    </ligand>
</feature>
<feature type="binding site" evidence="1">
    <location>
        <begin position="184"/>
        <end position="191"/>
    </location>
    <ligand>
        <name>GTP</name>
        <dbReference type="ChEBI" id="CHEBI:37565"/>
        <label>2</label>
    </ligand>
</feature>
<feature type="binding site" evidence="1">
    <location>
        <begin position="233"/>
        <end position="237"/>
    </location>
    <ligand>
        <name>GTP</name>
        <dbReference type="ChEBI" id="CHEBI:37565"/>
        <label>2</label>
    </ligand>
</feature>
<feature type="binding site" evidence="1">
    <location>
        <begin position="298"/>
        <end position="301"/>
    </location>
    <ligand>
        <name>GTP</name>
        <dbReference type="ChEBI" id="CHEBI:37565"/>
        <label>2</label>
    </ligand>
</feature>
<keyword id="KW-0342">GTP-binding</keyword>
<keyword id="KW-0547">Nucleotide-binding</keyword>
<keyword id="KW-1185">Reference proteome</keyword>
<keyword id="KW-0677">Repeat</keyword>
<keyword id="KW-0690">Ribosome biogenesis</keyword>
<comment type="function">
    <text evidence="1">GTPase that plays an essential role in the late steps of ribosome biogenesis.</text>
</comment>
<comment type="subunit">
    <text evidence="1">Associates with the 50S ribosomal subunit.</text>
</comment>
<comment type="similarity">
    <text evidence="1">Belongs to the TRAFAC class TrmE-Era-EngA-EngB-Septin-like GTPase superfamily. EngA (Der) GTPase family.</text>
</comment>
<sequence length="455" mass="50148">MQLPIVAIIGRPNVGKSTLLNRLAGGSEAIVYDQPGVTRDRLYLPAEWCGYRFEVVDTGGLVFEDSEVFLPLIREQVEIALAEAAAVLFVVDGQQGITGGDREVADWLRGRKPPVLIVANKLEEPSTALSLAAEFYALGLGEPYAVSAIHGSGTGDLLDALVAVLPKDQPEEQELPELRVSIVGRPNVGKSSLLNALVGGEHPRSMVSEVAGTTRDAIDTLVEHGERRYRLIDTAGIRRKSRVDYGPEAFGVTRAIRAIRRADVVVLVVDATEGIHDQERNLAAKIASAGRACVLVVNKWDAIEKDTYTMNHYRDEMRRELDFVEWAPVVFTSALTGQRVEKIFDAIDAAAGQHQRRVSTSVLNEALQDALLWRSPPASRQGRQGKVYYATQIATNPPTFVLFVNDTKLFKEGYRRYLEGQFRGSLGFEGSPVRFIFRGKPEREANRTARKSEPV</sequence>
<gene>
    <name evidence="1" type="primary">der</name>
    <name type="synonym">engA</name>
    <name type="ordered locus">gll3210</name>
</gene>
<evidence type="ECO:0000255" key="1">
    <source>
        <dbReference type="HAMAP-Rule" id="MF_00195"/>
    </source>
</evidence>
<dbReference type="EMBL" id="BA000045">
    <property type="protein sequence ID" value="BAC91151.1"/>
    <property type="molecule type" value="Genomic_DNA"/>
</dbReference>
<dbReference type="RefSeq" id="NP_926156.1">
    <property type="nucleotide sequence ID" value="NC_005125.1"/>
</dbReference>
<dbReference type="RefSeq" id="WP_011143202.1">
    <property type="nucleotide sequence ID" value="NC_005125.1"/>
</dbReference>
<dbReference type="SMR" id="Q7NGF9"/>
<dbReference type="FunCoup" id="Q7NGF9">
    <property type="interactions" value="162"/>
</dbReference>
<dbReference type="STRING" id="251221.gene:10760718"/>
<dbReference type="EnsemblBacteria" id="BAC91151">
    <property type="protein sequence ID" value="BAC91151"/>
    <property type="gene ID" value="BAC91151"/>
</dbReference>
<dbReference type="KEGG" id="gvi:gll3210"/>
<dbReference type="PATRIC" id="fig|251221.4.peg.3241"/>
<dbReference type="eggNOG" id="COG1160">
    <property type="taxonomic scope" value="Bacteria"/>
</dbReference>
<dbReference type="HOGENOM" id="CLU_016077_6_2_3"/>
<dbReference type="InParanoid" id="Q7NGF9"/>
<dbReference type="OrthoDB" id="9805918at2"/>
<dbReference type="PhylomeDB" id="Q7NGF9"/>
<dbReference type="Proteomes" id="UP000000557">
    <property type="component" value="Chromosome"/>
</dbReference>
<dbReference type="GO" id="GO:0016887">
    <property type="term" value="F:ATP hydrolysis activity"/>
    <property type="evidence" value="ECO:0007669"/>
    <property type="project" value="InterPro"/>
</dbReference>
<dbReference type="GO" id="GO:0005525">
    <property type="term" value="F:GTP binding"/>
    <property type="evidence" value="ECO:0007669"/>
    <property type="project" value="UniProtKB-UniRule"/>
</dbReference>
<dbReference type="GO" id="GO:0043022">
    <property type="term" value="F:ribosome binding"/>
    <property type="evidence" value="ECO:0000318"/>
    <property type="project" value="GO_Central"/>
</dbReference>
<dbReference type="GO" id="GO:0042254">
    <property type="term" value="P:ribosome biogenesis"/>
    <property type="evidence" value="ECO:0007669"/>
    <property type="project" value="UniProtKB-KW"/>
</dbReference>
<dbReference type="CDD" id="cd01894">
    <property type="entry name" value="EngA1"/>
    <property type="match status" value="1"/>
</dbReference>
<dbReference type="CDD" id="cd01895">
    <property type="entry name" value="EngA2"/>
    <property type="match status" value="1"/>
</dbReference>
<dbReference type="FunFam" id="3.30.300.20:FF:000004">
    <property type="entry name" value="GTPase Der"/>
    <property type="match status" value="1"/>
</dbReference>
<dbReference type="FunFam" id="3.40.50.300:FF:000040">
    <property type="entry name" value="GTPase Der"/>
    <property type="match status" value="1"/>
</dbReference>
<dbReference type="FunFam" id="3.40.50.300:FF:000057">
    <property type="entry name" value="GTPase Der"/>
    <property type="match status" value="1"/>
</dbReference>
<dbReference type="Gene3D" id="3.30.300.20">
    <property type="match status" value="1"/>
</dbReference>
<dbReference type="Gene3D" id="3.40.50.300">
    <property type="entry name" value="P-loop containing nucleotide triphosphate hydrolases"/>
    <property type="match status" value="2"/>
</dbReference>
<dbReference type="HAMAP" id="MF_00195">
    <property type="entry name" value="GTPase_Der"/>
    <property type="match status" value="1"/>
</dbReference>
<dbReference type="InterPro" id="IPR003593">
    <property type="entry name" value="AAA+_ATPase"/>
</dbReference>
<dbReference type="InterPro" id="IPR031166">
    <property type="entry name" value="G_ENGA"/>
</dbReference>
<dbReference type="InterPro" id="IPR006073">
    <property type="entry name" value="GTP-bd"/>
</dbReference>
<dbReference type="InterPro" id="IPR016484">
    <property type="entry name" value="GTPase_Der"/>
</dbReference>
<dbReference type="InterPro" id="IPR032859">
    <property type="entry name" value="KH_dom-like"/>
</dbReference>
<dbReference type="InterPro" id="IPR015946">
    <property type="entry name" value="KH_dom-like_a/b"/>
</dbReference>
<dbReference type="InterPro" id="IPR027417">
    <property type="entry name" value="P-loop_NTPase"/>
</dbReference>
<dbReference type="InterPro" id="IPR005225">
    <property type="entry name" value="Small_GTP-bd"/>
</dbReference>
<dbReference type="NCBIfam" id="TIGR03594">
    <property type="entry name" value="GTPase_EngA"/>
    <property type="match status" value="1"/>
</dbReference>
<dbReference type="NCBIfam" id="TIGR00231">
    <property type="entry name" value="small_GTP"/>
    <property type="match status" value="2"/>
</dbReference>
<dbReference type="PANTHER" id="PTHR43834">
    <property type="entry name" value="GTPASE DER"/>
    <property type="match status" value="1"/>
</dbReference>
<dbReference type="PANTHER" id="PTHR43834:SF6">
    <property type="entry name" value="GTPASE DER"/>
    <property type="match status" value="1"/>
</dbReference>
<dbReference type="Pfam" id="PF14714">
    <property type="entry name" value="KH_dom-like"/>
    <property type="match status" value="1"/>
</dbReference>
<dbReference type="Pfam" id="PF01926">
    <property type="entry name" value="MMR_HSR1"/>
    <property type="match status" value="2"/>
</dbReference>
<dbReference type="PIRSF" id="PIRSF006485">
    <property type="entry name" value="GTP-binding_EngA"/>
    <property type="match status" value="1"/>
</dbReference>
<dbReference type="PRINTS" id="PR00326">
    <property type="entry name" value="GTP1OBG"/>
</dbReference>
<dbReference type="SMART" id="SM00382">
    <property type="entry name" value="AAA"/>
    <property type="match status" value="2"/>
</dbReference>
<dbReference type="SUPFAM" id="SSF52540">
    <property type="entry name" value="P-loop containing nucleoside triphosphate hydrolases"/>
    <property type="match status" value="2"/>
</dbReference>
<dbReference type="PROSITE" id="PS51712">
    <property type="entry name" value="G_ENGA"/>
    <property type="match status" value="2"/>
</dbReference>